<accession>Q1QDJ5</accession>
<proteinExistence type="inferred from homology"/>
<organism>
    <name type="scientific">Psychrobacter cryohalolentis (strain ATCC BAA-1226 / DSM 17306 / VKM B-2378 / K5)</name>
    <dbReference type="NCBI Taxonomy" id="335284"/>
    <lineage>
        <taxon>Bacteria</taxon>
        <taxon>Pseudomonadati</taxon>
        <taxon>Pseudomonadota</taxon>
        <taxon>Gammaproteobacteria</taxon>
        <taxon>Moraxellales</taxon>
        <taxon>Moraxellaceae</taxon>
        <taxon>Psychrobacter</taxon>
    </lineage>
</organism>
<keyword id="KW-0067">ATP-binding</keyword>
<keyword id="KW-0436">Ligase</keyword>
<keyword id="KW-0547">Nucleotide-binding</keyword>
<keyword id="KW-0648">Protein biosynthesis</keyword>
<protein>
    <recommendedName>
        <fullName evidence="1">Aspartyl/glutamyl-tRNA(Asn/Gln) amidotransferase subunit B</fullName>
        <shortName evidence="1">Asp/Glu-ADT subunit B</shortName>
        <ecNumber evidence="1">6.3.5.-</ecNumber>
    </recommendedName>
</protein>
<sequence>MNTATTTDNNAVRKHDVRKELFVDGYEVVIGIEIHCQLNTESKIFSSAPTDFGHEPNSQASIVDLGLPGVLPVLNAGVVDRALKFGIGVNAELGLFNTFDRKNYFYPDLPKGYQITQMANPIVGEGYIDVVVNEGEKNEYPKRMGITRAHLEEDAGKSVHDAVDGMTGVDLNRAGTPLIEIVSEPDMRSAHEALAYIKAIHQLVTWLGISDAIMAEGSFRCDCNVSIRKPGAELGTRTELKNLNSFRFIERAINREIERQIDILEDGGKVVQATMLYDPERDETRVMRTKEDANDYRYFPDPDLLPVRIEQHTVDSIRAAMPELPVARRARFEEALGLSEYDARILTGSRQIADYFENVVAEVGQADAKMAANWVMGDLLGALNKDDKEITDSPISAKQLAGMLSRIKDDTLSGKLAKKVFSALYEREGGDADDAADKIIEEKGLKQETDTGAIKAIVEDVIAKNAAMVEEYRGGKEKAFNGLVGQVMKASRGSANPQQVNQILKELLG</sequence>
<name>GATB_PSYCK</name>
<evidence type="ECO:0000255" key="1">
    <source>
        <dbReference type="HAMAP-Rule" id="MF_00121"/>
    </source>
</evidence>
<dbReference type="EC" id="6.3.5.-" evidence="1"/>
<dbReference type="EMBL" id="CP000323">
    <property type="protein sequence ID" value="ABE74258.1"/>
    <property type="molecule type" value="Genomic_DNA"/>
</dbReference>
<dbReference type="RefSeq" id="WP_011512843.1">
    <property type="nucleotide sequence ID" value="NC_007969.1"/>
</dbReference>
<dbReference type="SMR" id="Q1QDJ5"/>
<dbReference type="STRING" id="335284.Pcryo_0475"/>
<dbReference type="KEGG" id="pcr:Pcryo_0475"/>
<dbReference type="eggNOG" id="COG0064">
    <property type="taxonomic scope" value="Bacteria"/>
</dbReference>
<dbReference type="HOGENOM" id="CLU_019240_0_0_6"/>
<dbReference type="Proteomes" id="UP000002425">
    <property type="component" value="Chromosome"/>
</dbReference>
<dbReference type="GO" id="GO:0050566">
    <property type="term" value="F:asparaginyl-tRNA synthase (glutamine-hydrolyzing) activity"/>
    <property type="evidence" value="ECO:0007669"/>
    <property type="project" value="RHEA"/>
</dbReference>
<dbReference type="GO" id="GO:0005524">
    <property type="term" value="F:ATP binding"/>
    <property type="evidence" value="ECO:0007669"/>
    <property type="project" value="UniProtKB-KW"/>
</dbReference>
<dbReference type="GO" id="GO:0050567">
    <property type="term" value="F:glutaminyl-tRNA synthase (glutamine-hydrolyzing) activity"/>
    <property type="evidence" value="ECO:0007669"/>
    <property type="project" value="UniProtKB-UniRule"/>
</dbReference>
<dbReference type="GO" id="GO:0070681">
    <property type="term" value="P:glutaminyl-tRNAGln biosynthesis via transamidation"/>
    <property type="evidence" value="ECO:0007669"/>
    <property type="project" value="TreeGrafter"/>
</dbReference>
<dbReference type="GO" id="GO:0006412">
    <property type="term" value="P:translation"/>
    <property type="evidence" value="ECO:0007669"/>
    <property type="project" value="UniProtKB-UniRule"/>
</dbReference>
<dbReference type="FunFam" id="1.10.10.410:FF:000001">
    <property type="entry name" value="Aspartyl/glutamyl-tRNA(Asn/Gln) amidotransferase subunit B"/>
    <property type="match status" value="1"/>
</dbReference>
<dbReference type="FunFam" id="1.10.150.380:FF:000001">
    <property type="entry name" value="Aspartyl/glutamyl-tRNA(Asn/Gln) amidotransferase subunit B"/>
    <property type="match status" value="1"/>
</dbReference>
<dbReference type="Gene3D" id="1.10.10.410">
    <property type="match status" value="1"/>
</dbReference>
<dbReference type="Gene3D" id="1.10.150.380">
    <property type="entry name" value="GatB domain, N-terminal subdomain"/>
    <property type="match status" value="1"/>
</dbReference>
<dbReference type="HAMAP" id="MF_00121">
    <property type="entry name" value="GatB"/>
    <property type="match status" value="1"/>
</dbReference>
<dbReference type="InterPro" id="IPR017959">
    <property type="entry name" value="Asn/Gln-tRNA_amidoTrfase_suB/E"/>
</dbReference>
<dbReference type="InterPro" id="IPR006075">
    <property type="entry name" value="Asn/Gln-tRNA_Trfase_suB/E_cat"/>
</dbReference>
<dbReference type="InterPro" id="IPR018027">
    <property type="entry name" value="Asn/Gln_amidotransferase"/>
</dbReference>
<dbReference type="InterPro" id="IPR003789">
    <property type="entry name" value="Asn/Gln_tRNA_amidoTrase-B-like"/>
</dbReference>
<dbReference type="InterPro" id="IPR004413">
    <property type="entry name" value="GatB"/>
</dbReference>
<dbReference type="InterPro" id="IPR042114">
    <property type="entry name" value="GatB_C_1"/>
</dbReference>
<dbReference type="InterPro" id="IPR023168">
    <property type="entry name" value="GatB_Yqey_C_2"/>
</dbReference>
<dbReference type="InterPro" id="IPR017958">
    <property type="entry name" value="Gln-tRNA_amidoTrfase_suB_CS"/>
</dbReference>
<dbReference type="InterPro" id="IPR014746">
    <property type="entry name" value="Gln_synth/guanido_kin_cat_dom"/>
</dbReference>
<dbReference type="NCBIfam" id="TIGR00133">
    <property type="entry name" value="gatB"/>
    <property type="match status" value="1"/>
</dbReference>
<dbReference type="NCBIfam" id="NF004012">
    <property type="entry name" value="PRK05477.1-2"/>
    <property type="match status" value="1"/>
</dbReference>
<dbReference type="NCBIfam" id="NF004014">
    <property type="entry name" value="PRK05477.1-4"/>
    <property type="match status" value="1"/>
</dbReference>
<dbReference type="NCBIfam" id="NF004015">
    <property type="entry name" value="PRK05477.1-5"/>
    <property type="match status" value="1"/>
</dbReference>
<dbReference type="PANTHER" id="PTHR11659">
    <property type="entry name" value="GLUTAMYL-TRNA GLN AMIDOTRANSFERASE SUBUNIT B MITOCHONDRIAL AND PROKARYOTIC PET112-RELATED"/>
    <property type="match status" value="1"/>
</dbReference>
<dbReference type="PANTHER" id="PTHR11659:SF0">
    <property type="entry name" value="GLUTAMYL-TRNA(GLN) AMIDOTRANSFERASE SUBUNIT B, MITOCHONDRIAL"/>
    <property type="match status" value="1"/>
</dbReference>
<dbReference type="Pfam" id="PF02934">
    <property type="entry name" value="GatB_N"/>
    <property type="match status" value="1"/>
</dbReference>
<dbReference type="Pfam" id="PF02637">
    <property type="entry name" value="GatB_Yqey"/>
    <property type="match status" value="1"/>
</dbReference>
<dbReference type="SMART" id="SM00845">
    <property type="entry name" value="GatB_Yqey"/>
    <property type="match status" value="1"/>
</dbReference>
<dbReference type="SUPFAM" id="SSF89095">
    <property type="entry name" value="GatB/YqeY motif"/>
    <property type="match status" value="1"/>
</dbReference>
<dbReference type="SUPFAM" id="SSF55931">
    <property type="entry name" value="Glutamine synthetase/guanido kinase"/>
    <property type="match status" value="1"/>
</dbReference>
<dbReference type="PROSITE" id="PS01234">
    <property type="entry name" value="GATB"/>
    <property type="match status" value="1"/>
</dbReference>
<reference key="1">
    <citation type="submission" date="2006-03" db="EMBL/GenBank/DDBJ databases">
        <title>Complete sequence of chromosome of Psychrobacter cryohalolentis K5.</title>
        <authorList>
            <consortium name="US DOE Joint Genome Institute"/>
            <person name="Copeland A."/>
            <person name="Lucas S."/>
            <person name="Lapidus A."/>
            <person name="Barry K."/>
            <person name="Detter J.C."/>
            <person name="Glavina T."/>
            <person name="Hammon N."/>
            <person name="Israni S."/>
            <person name="Dalin E."/>
            <person name="Tice H."/>
            <person name="Pitluck S."/>
            <person name="Brettin T."/>
            <person name="Bruce D."/>
            <person name="Han C."/>
            <person name="Tapia R."/>
            <person name="Sims D.R."/>
            <person name="Gilna P."/>
            <person name="Schmutz J."/>
            <person name="Larimer F."/>
            <person name="Land M."/>
            <person name="Hauser L."/>
            <person name="Kyrpides N."/>
            <person name="Kim E."/>
            <person name="Richardson P."/>
        </authorList>
    </citation>
    <scope>NUCLEOTIDE SEQUENCE [LARGE SCALE GENOMIC DNA]</scope>
    <source>
        <strain>ATCC BAA-1226 / DSM 17306 / VKM B-2378 / K5</strain>
    </source>
</reference>
<gene>
    <name evidence="1" type="primary">gatB</name>
    <name type="ordered locus">Pcryo_0475</name>
</gene>
<feature type="chain" id="PRO_0000241262" description="Aspartyl/glutamyl-tRNA(Asn/Gln) amidotransferase subunit B">
    <location>
        <begin position="1"/>
        <end position="509"/>
    </location>
</feature>
<comment type="function">
    <text evidence="1">Allows the formation of correctly charged Asn-tRNA(Asn) or Gln-tRNA(Gln) through the transamidation of misacylated Asp-tRNA(Asn) or Glu-tRNA(Gln) in organisms which lack either or both of asparaginyl-tRNA or glutaminyl-tRNA synthetases. The reaction takes place in the presence of glutamine and ATP through an activated phospho-Asp-tRNA(Asn) or phospho-Glu-tRNA(Gln).</text>
</comment>
<comment type="catalytic activity">
    <reaction evidence="1">
        <text>L-glutamyl-tRNA(Gln) + L-glutamine + ATP + H2O = L-glutaminyl-tRNA(Gln) + L-glutamate + ADP + phosphate + H(+)</text>
        <dbReference type="Rhea" id="RHEA:17521"/>
        <dbReference type="Rhea" id="RHEA-COMP:9681"/>
        <dbReference type="Rhea" id="RHEA-COMP:9684"/>
        <dbReference type="ChEBI" id="CHEBI:15377"/>
        <dbReference type="ChEBI" id="CHEBI:15378"/>
        <dbReference type="ChEBI" id="CHEBI:29985"/>
        <dbReference type="ChEBI" id="CHEBI:30616"/>
        <dbReference type="ChEBI" id="CHEBI:43474"/>
        <dbReference type="ChEBI" id="CHEBI:58359"/>
        <dbReference type="ChEBI" id="CHEBI:78520"/>
        <dbReference type="ChEBI" id="CHEBI:78521"/>
        <dbReference type="ChEBI" id="CHEBI:456216"/>
    </reaction>
</comment>
<comment type="catalytic activity">
    <reaction evidence="1">
        <text>L-aspartyl-tRNA(Asn) + L-glutamine + ATP + H2O = L-asparaginyl-tRNA(Asn) + L-glutamate + ADP + phosphate + 2 H(+)</text>
        <dbReference type="Rhea" id="RHEA:14513"/>
        <dbReference type="Rhea" id="RHEA-COMP:9674"/>
        <dbReference type="Rhea" id="RHEA-COMP:9677"/>
        <dbReference type="ChEBI" id="CHEBI:15377"/>
        <dbReference type="ChEBI" id="CHEBI:15378"/>
        <dbReference type="ChEBI" id="CHEBI:29985"/>
        <dbReference type="ChEBI" id="CHEBI:30616"/>
        <dbReference type="ChEBI" id="CHEBI:43474"/>
        <dbReference type="ChEBI" id="CHEBI:58359"/>
        <dbReference type="ChEBI" id="CHEBI:78515"/>
        <dbReference type="ChEBI" id="CHEBI:78516"/>
        <dbReference type="ChEBI" id="CHEBI:456216"/>
    </reaction>
</comment>
<comment type="subunit">
    <text evidence="1">Heterotrimer of A, B and C subunits.</text>
</comment>
<comment type="similarity">
    <text evidence="1">Belongs to the GatB/GatE family. GatB subfamily.</text>
</comment>